<reference evidence="5" key="1">
    <citation type="journal article" date="1991" name="Plant Cell">
        <title>Expression patterns of myb genes from Antirrhinum flowers.</title>
        <authorList>
            <person name="Jackson D."/>
            <person name="Culianez-Macia F."/>
            <person name="Prescott A.G."/>
            <person name="Roberts K."/>
            <person name="Martin C."/>
        </authorList>
    </citation>
    <scope>NUCLEOTIDE SEQUENCE [MRNA]</scope>
    <scope>TISSUE SPECIFICITY</scope>
    <scope>DEVELOPMENTAL STAGE</scope>
    <source>
        <strain evidence="3">cv. JI:522</strain>
        <tissue evidence="3">Flower bud</tissue>
    </source>
</reference>
<comment type="function">
    <text evidence="5">Transcription factor.</text>
</comment>
<comment type="subcellular location">
    <subcellularLocation>
        <location evidence="1 2">Nucleus</location>
    </subcellularLocation>
</comment>
<comment type="tissue specificity">
    <text evidence="3">Expressed only in flowers.</text>
</comment>
<comment type="developmental stage">
    <text evidence="3">First detected in 15-20 mm buds. Expression increases as flowers develop.</text>
</comment>
<proteinExistence type="evidence at transcript level"/>
<gene>
    <name evidence="4" type="primary">MYB305</name>
</gene>
<keyword id="KW-0238">DNA-binding</keyword>
<keyword id="KW-0539">Nucleus</keyword>
<keyword id="KW-0677">Repeat</keyword>
<keyword id="KW-0804">Transcription</keyword>
<keyword id="KW-0805">Transcription regulation</keyword>
<feature type="chain" id="PRO_0000291258" description="Myb-related protein 305">
    <location>
        <begin position="1"/>
        <end position="205"/>
    </location>
</feature>
<feature type="domain" description="HTH myb-type 1" evidence="2">
    <location>
        <begin position="10"/>
        <end position="62"/>
    </location>
</feature>
<feature type="domain" description="HTH myb-type 2" evidence="2">
    <location>
        <begin position="63"/>
        <end position="117"/>
    </location>
</feature>
<feature type="DNA-binding region" description="H-T-H motif" evidence="2">
    <location>
        <begin position="38"/>
        <end position="62"/>
    </location>
</feature>
<feature type="DNA-binding region" description="H-T-H motif" evidence="2">
    <location>
        <begin position="90"/>
        <end position="113"/>
    </location>
</feature>
<protein>
    <recommendedName>
        <fullName>Myb-related protein 305</fullName>
    </recommendedName>
</protein>
<name>MYB05_ANTMA</name>
<evidence type="ECO:0000250" key="1">
    <source>
        <dbReference type="UniProtKB" id="Q4JL84"/>
    </source>
</evidence>
<evidence type="ECO:0000255" key="2">
    <source>
        <dbReference type="PROSITE-ProRule" id="PRU00625"/>
    </source>
</evidence>
<evidence type="ECO:0000269" key="3">
    <source>
    </source>
</evidence>
<evidence type="ECO:0000303" key="4">
    <source>
    </source>
</evidence>
<evidence type="ECO:0000305" key="5"/>
<sequence length="205" mass="23507">MDKKPCNSQDVEVRKGPWTMEEDLILINYIANHGEGVWNSLARSAGLKRTGKSCRLRWLNYLRPDVRRGNITPEEQLLIMELHAKWGNRWSKIAKTLPGRTDNEIKNYWRTRIQKHMEQGDQSSSTTFNNGQMNLDHSCNDQASSSQMSACGPVVDHTAVDQSSYSPHSFNGNDHTFQAPFPTDQSNDNMWSMEDFWSMQLLNGD</sequence>
<organism>
    <name type="scientific">Antirrhinum majus</name>
    <name type="common">Garden snapdragon</name>
    <dbReference type="NCBI Taxonomy" id="4151"/>
    <lineage>
        <taxon>Eukaryota</taxon>
        <taxon>Viridiplantae</taxon>
        <taxon>Streptophyta</taxon>
        <taxon>Embryophyta</taxon>
        <taxon>Tracheophyta</taxon>
        <taxon>Spermatophyta</taxon>
        <taxon>Magnoliopsida</taxon>
        <taxon>eudicotyledons</taxon>
        <taxon>Gunneridae</taxon>
        <taxon>Pentapetalae</taxon>
        <taxon>asterids</taxon>
        <taxon>lamiids</taxon>
        <taxon>Lamiales</taxon>
        <taxon>Plantaginaceae</taxon>
        <taxon>Antirrhineae</taxon>
        <taxon>Antirrhinum</taxon>
    </lineage>
</organism>
<accession>P81391</accession>
<dbReference type="PIR" id="JQ0958">
    <property type="entry name" value="JQ0958"/>
</dbReference>
<dbReference type="SMR" id="P81391"/>
<dbReference type="GO" id="GO:0005634">
    <property type="term" value="C:nucleus"/>
    <property type="evidence" value="ECO:0007669"/>
    <property type="project" value="UniProtKB-SubCell"/>
</dbReference>
<dbReference type="GO" id="GO:0003700">
    <property type="term" value="F:DNA-binding transcription factor activity"/>
    <property type="evidence" value="ECO:0007669"/>
    <property type="project" value="InterPro"/>
</dbReference>
<dbReference type="GO" id="GO:0043565">
    <property type="term" value="F:sequence-specific DNA binding"/>
    <property type="evidence" value="ECO:0007669"/>
    <property type="project" value="InterPro"/>
</dbReference>
<dbReference type="CDD" id="cd00167">
    <property type="entry name" value="SANT"/>
    <property type="match status" value="2"/>
</dbReference>
<dbReference type="FunFam" id="1.10.10.60:FF:000011">
    <property type="entry name" value="Myb transcription factor"/>
    <property type="match status" value="1"/>
</dbReference>
<dbReference type="FunFam" id="1.10.10.60:FF:000358">
    <property type="entry name" value="Myb-related protein 305"/>
    <property type="match status" value="1"/>
</dbReference>
<dbReference type="Gene3D" id="1.10.10.60">
    <property type="entry name" value="Homeodomain-like"/>
    <property type="match status" value="2"/>
</dbReference>
<dbReference type="InterPro" id="IPR044676">
    <property type="entry name" value="EOBI/EOBII-like_plant"/>
</dbReference>
<dbReference type="InterPro" id="IPR009057">
    <property type="entry name" value="Homeodomain-like_sf"/>
</dbReference>
<dbReference type="InterPro" id="IPR017930">
    <property type="entry name" value="Myb_dom"/>
</dbReference>
<dbReference type="InterPro" id="IPR001005">
    <property type="entry name" value="SANT/Myb"/>
</dbReference>
<dbReference type="PANTHER" id="PTHR45675">
    <property type="entry name" value="MYB TRANSCRIPTION FACTOR-RELATED-RELATED"/>
    <property type="match status" value="1"/>
</dbReference>
<dbReference type="PANTHER" id="PTHR45675:SF44">
    <property type="entry name" value="TRANSCRIPTION FACTOR MYB24"/>
    <property type="match status" value="1"/>
</dbReference>
<dbReference type="Pfam" id="PF00249">
    <property type="entry name" value="Myb_DNA-binding"/>
    <property type="match status" value="2"/>
</dbReference>
<dbReference type="SMART" id="SM00717">
    <property type="entry name" value="SANT"/>
    <property type="match status" value="2"/>
</dbReference>
<dbReference type="SUPFAM" id="SSF46689">
    <property type="entry name" value="Homeodomain-like"/>
    <property type="match status" value="1"/>
</dbReference>
<dbReference type="PROSITE" id="PS51294">
    <property type="entry name" value="HTH_MYB"/>
    <property type="match status" value="2"/>
</dbReference>